<feature type="chain" id="PRO_0000379103" description="SPbeta prophage-derived uncharacterized protein YotD">
    <location>
        <begin position="1"/>
        <end position="43"/>
    </location>
</feature>
<reference key="1">
    <citation type="journal article" date="1998" name="DNA Res.">
        <title>Sequence analysis of the Bacillus subtilis 168 chromosome region between the sspC and odhA loci (184 degrees-180 degrees).</title>
        <authorList>
            <person name="Ghim S.-Y."/>
            <person name="Choi S.-K."/>
            <person name="Shin B.-S."/>
            <person name="Jeong Y.-M."/>
            <person name="Sorokin A."/>
            <person name="Ehrlich S.D."/>
            <person name="Park S.-H."/>
        </authorList>
    </citation>
    <scope>NUCLEOTIDE SEQUENCE [GENOMIC DNA]</scope>
    <source>
        <strain>168</strain>
    </source>
</reference>
<reference key="2">
    <citation type="journal article" date="1997" name="Nature">
        <title>The complete genome sequence of the Gram-positive bacterium Bacillus subtilis.</title>
        <authorList>
            <person name="Kunst F."/>
            <person name="Ogasawara N."/>
            <person name="Moszer I."/>
            <person name="Albertini A.M."/>
            <person name="Alloni G."/>
            <person name="Azevedo V."/>
            <person name="Bertero M.G."/>
            <person name="Bessieres P."/>
            <person name="Bolotin A."/>
            <person name="Borchert S."/>
            <person name="Borriss R."/>
            <person name="Boursier L."/>
            <person name="Brans A."/>
            <person name="Braun M."/>
            <person name="Brignell S.C."/>
            <person name="Bron S."/>
            <person name="Brouillet S."/>
            <person name="Bruschi C.V."/>
            <person name="Caldwell B."/>
            <person name="Capuano V."/>
            <person name="Carter N.M."/>
            <person name="Choi S.-K."/>
            <person name="Codani J.-J."/>
            <person name="Connerton I.F."/>
            <person name="Cummings N.J."/>
            <person name="Daniel R.A."/>
            <person name="Denizot F."/>
            <person name="Devine K.M."/>
            <person name="Duesterhoeft A."/>
            <person name="Ehrlich S.D."/>
            <person name="Emmerson P.T."/>
            <person name="Entian K.-D."/>
            <person name="Errington J."/>
            <person name="Fabret C."/>
            <person name="Ferrari E."/>
            <person name="Foulger D."/>
            <person name="Fritz C."/>
            <person name="Fujita M."/>
            <person name="Fujita Y."/>
            <person name="Fuma S."/>
            <person name="Galizzi A."/>
            <person name="Galleron N."/>
            <person name="Ghim S.-Y."/>
            <person name="Glaser P."/>
            <person name="Goffeau A."/>
            <person name="Golightly E.J."/>
            <person name="Grandi G."/>
            <person name="Guiseppi G."/>
            <person name="Guy B.J."/>
            <person name="Haga K."/>
            <person name="Haiech J."/>
            <person name="Harwood C.R."/>
            <person name="Henaut A."/>
            <person name="Hilbert H."/>
            <person name="Holsappel S."/>
            <person name="Hosono S."/>
            <person name="Hullo M.-F."/>
            <person name="Itaya M."/>
            <person name="Jones L.-M."/>
            <person name="Joris B."/>
            <person name="Karamata D."/>
            <person name="Kasahara Y."/>
            <person name="Klaerr-Blanchard M."/>
            <person name="Klein C."/>
            <person name="Kobayashi Y."/>
            <person name="Koetter P."/>
            <person name="Koningstein G."/>
            <person name="Krogh S."/>
            <person name="Kumano M."/>
            <person name="Kurita K."/>
            <person name="Lapidus A."/>
            <person name="Lardinois S."/>
            <person name="Lauber J."/>
            <person name="Lazarevic V."/>
            <person name="Lee S.-M."/>
            <person name="Levine A."/>
            <person name="Liu H."/>
            <person name="Masuda S."/>
            <person name="Mauel C."/>
            <person name="Medigue C."/>
            <person name="Medina N."/>
            <person name="Mellado R.P."/>
            <person name="Mizuno M."/>
            <person name="Moestl D."/>
            <person name="Nakai S."/>
            <person name="Noback M."/>
            <person name="Noone D."/>
            <person name="O'Reilly M."/>
            <person name="Ogawa K."/>
            <person name="Ogiwara A."/>
            <person name="Oudega B."/>
            <person name="Park S.-H."/>
            <person name="Parro V."/>
            <person name="Pohl T.M."/>
            <person name="Portetelle D."/>
            <person name="Porwollik S."/>
            <person name="Prescott A.M."/>
            <person name="Presecan E."/>
            <person name="Pujic P."/>
            <person name="Purnelle B."/>
            <person name="Rapoport G."/>
            <person name="Rey M."/>
            <person name="Reynolds S."/>
            <person name="Rieger M."/>
            <person name="Rivolta C."/>
            <person name="Rocha E."/>
            <person name="Roche B."/>
            <person name="Rose M."/>
            <person name="Sadaie Y."/>
            <person name="Sato T."/>
            <person name="Scanlan E."/>
            <person name="Schleich S."/>
            <person name="Schroeter R."/>
            <person name="Scoffone F."/>
            <person name="Sekiguchi J."/>
            <person name="Sekowska A."/>
            <person name="Seror S.J."/>
            <person name="Serror P."/>
            <person name="Shin B.-S."/>
            <person name="Soldo B."/>
            <person name="Sorokin A."/>
            <person name="Tacconi E."/>
            <person name="Takagi T."/>
            <person name="Takahashi H."/>
            <person name="Takemaru K."/>
            <person name="Takeuchi M."/>
            <person name="Tamakoshi A."/>
            <person name="Tanaka T."/>
            <person name="Terpstra P."/>
            <person name="Tognoni A."/>
            <person name="Tosato V."/>
            <person name="Uchiyama S."/>
            <person name="Vandenbol M."/>
            <person name="Vannier F."/>
            <person name="Vassarotti A."/>
            <person name="Viari A."/>
            <person name="Wambutt R."/>
            <person name="Wedler E."/>
            <person name="Wedler H."/>
            <person name="Weitzenegger T."/>
            <person name="Winters P."/>
            <person name="Wipat A."/>
            <person name="Yamamoto H."/>
            <person name="Yamane K."/>
            <person name="Yasumoto K."/>
            <person name="Yata K."/>
            <person name="Yoshida K."/>
            <person name="Yoshikawa H.-F."/>
            <person name="Zumstein E."/>
            <person name="Yoshikawa H."/>
            <person name="Danchin A."/>
        </authorList>
    </citation>
    <scope>NUCLEOTIDE SEQUENCE [LARGE SCALE GENOMIC DNA]</scope>
    <source>
        <strain>168</strain>
    </source>
</reference>
<protein>
    <recommendedName>
        <fullName>SPbeta prophage-derived uncharacterized protein YotD</fullName>
    </recommendedName>
</protein>
<name>YOTD_BACSU</name>
<organism>
    <name type="scientific">Bacillus subtilis (strain 168)</name>
    <dbReference type="NCBI Taxonomy" id="224308"/>
    <lineage>
        <taxon>Bacteria</taxon>
        <taxon>Bacillati</taxon>
        <taxon>Bacillota</taxon>
        <taxon>Bacilli</taxon>
        <taxon>Bacillales</taxon>
        <taxon>Bacillaceae</taxon>
        <taxon>Bacillus</taxon>
    </lineage>
</organism>
<keyword id="KW-1185">Reference proteome</keyword>
<gene>
    <name type="primary">yotD</name>
    <name type="synonym">yokD</name>
    <name type="ordered locus">BSU19920</name>
</gene>
<dbReference type="EMBL" id="AF006665">
    <property type="protein sequence ID" value="AAB81140.1"/>
    <property type="molecule type" value="Genomic_DNA"/>
</dbReference>
<dbReference type="EMBL" id="AL009126">
    <property type="protein sequence ID" value="CAB13883.1"/>
    <property type="molecule type" value="Genomic_DNA"/>
</dbReference>
<dbReference type="RefSeq" id="NP_389873.1">
    <property type="nucleotide sequence ID" value="NC_000964.3"/>
</dbReference>
<dbReference type="RefSeq" id="WP_009967449.1">
    <property type="nucleotide sequence ID" value="NZ_OZ025638.1"/>
</dbReference>
<dbReference type="SMR" id="O34407"/>
<dbReference type="FunCoup" id="O34407">
    <property type="interactions" value="25"/>
</dbReference>
<dbReference type="STRING" id="224308.BSU19920"/>
<dbReference type="PaxDb" id="224308-BSU19920"/>
<dbReference type="EnsemblBacteria" id="CAB13883">
    <property type="protein sequence ID" value="CAB13883"/>
    <property type="gene ID" value="BSU_19920"/>
</dbReference>
<dbReference type="GeneID" id="940092"/>
<dbReference type="KEGG" id="bsu:BSU19920"/>
<dbReference type="PATRIC" id="fig|224308.179.peg.2180"/>
<dbReference type="InParanoid" id="O34407"/>
<dbReference type="OrthoDB" id="9800361at2"/>
<dbReference type="BioCyc" id="BSUB:BSU19920-MONOMER"/>
<dbReference type="Proteomes" id="UP000001570">
    <property type="component" value="Chromosome"/>
</dbReference>
<sequence>MDSREQIDWTCNECNFSWIGDNSDFSCPSCDEIDIKPKNKILD</sequence>
<accession>O34407</accession>
<accession>Q7BVW4</accession>
<proteinExistence type="predicted"/>